<keyword id="KW-1003">Cell membrane</keyword>
<keyword id="KW-0961">Cell wall biogenesis/degradation</keyword>
<keyword id="KW-0328">Glycosyltransferase</keyword>
<keyword id="KW-0472">Membrane</keyword>
<keyword id="KW-0808">Transferase</keyword>
<keyword id="KW-0812">Transmembrane</keyword>
<keyword id="KW-1133">Transmembrane helix</keyword>
<protein>
    <recommendedName>
        <fullName>Chitin synthase 1</fullName>
        <ecNumber>2.4.1.16</ecNumber>
    </recommendedName>
    <alternativeName>
        <fullName>Chitin-UDP acetyl-glucosaminyl transferase 1</fullName>
    </alternativeName>
    <alternativeName>
        <fullName>Class-II chitin synthase 1</fullName>
    </alternativeName>
</protein>
<evidence type="ECO:0000255" key="1"/>
<evidence type="ECO:0000256" key="2">
    <source>
        <dbReference type="SAM" id="MobiDB-lite"/>
    </source>
</evidence>
<evidence type="ECO:0000305" key="3"/>
<accession>P87073</accession>
<reference key="1">
    <citation type="submission" date="1997-05" db="EMBL/GenBank/DDBJ databases">
        <authorList>
            <person name="Miyazaki A."/>
            <person name="Ootaki T."/>
        </authorList>
    </citation>
    <scope>NUCLEOTIDE SEQUENCE [GENOMIC DNA]</scope>
    <source>
        <strain>ATCC 8743b / DSM 1359 / FGSC 10004 / NBRC 33097 / NRRL 1555</strain>
    </source>
</reference>
<reference key="2">
    <citation type="journal article" date="1993" name="Gene">
        <title>Chitin synthase-encoding gene(s) of the Zygomycete fungus Phycomyces blakesleeanus.</title>
        <authorList>
            <person name="Miyazaki A."/>
            <person name="Momany M."/>
            <person name="Szaniszlo P.J."/>
            <person name="Jayaram M."/>
            <person name="Ootaki T."/>
        </authorList>
    </citation>
    <scope>NUCLEOTIDE SEQUENCE [GENOMIC DNA] OF 172-370</scope>
    <source>
        <strain>ATCC 8743b / DSM 1359 / FGSC 10004 / NBRC 33097 / NRRL 1555</strain>
    </source>
</reference>
<gene>
    <name type="primary">chs1</name>
</gene>
<feature type="chain" id="PRO_0000193708" description="Chitin synthase 1">
    <location>
        <begin position="1"/>
        <end position="841"/>
    </location>
</feature>
<feature type="transmembrane region" description="Helical" evidence="1">
    <location>
        <begin position="302"/>
        <end position="322"/>
    </location>
</feature>
<feature type="transmembrane region" description="Helical" evidence="1">
    <location>
        <begin position="385"/>
        <end position="405"/>
    </location>
</feature>
<feature type="transmembrane region" description="Helical" evidence="1">
    <location>
        <begin position="526"/>
        <end position="546"/>
    </location>
</feature>
<feature type="transmembrane region" description="Helical" evidence="1">
    <location>
        <begin position="564"/>
        <end position="584"/>
    </location>
</feature>
<feature type="transmembrane region" description="Helical" evidence="1">
    <location>
        <begin position="602"/>
        <end position="622"/>
    </location>
</feature>
<feature type="transmembrane region" description="Helical" evidence="1">
    <location>
        <begin position="644"/>
        <end position="664"/>
    </location>
</feature>
<feature type="transmembrane region" description="Helical" evidence="1">
    <location>
        <begin position="673"/>
        <end position="693"/>
    </location>
</feature>
<feature type="transmembrane region" description="Helical" evidence="1">
    <location>
        <begin position="778"/>
        <end position="798"/>
    </location>
</feature>
<feature type="transmembrane region" description="Helical" evidence="1">
    <location>
        <begin position="816"/>
        <end position="836"/>
    </location>
</feature>
<feature type="region of interest" description="Disordered" evidence="2">
    <location>
        <begin position="1"/>
        <end position="98"/>
    </location>
</feature>
<feature type="compositionally biased region" description="Basic and acidic residues" evidence="2">
    <location>
        <begin position="1"/>
        <end position="13"/>
    </location>
</feature>
<feature type="compositionally biased region" description="Pro residues" evidence="2">
    <location>
        <begin position="76"/>
        <end position="85"/>
    </location>
</feature>
<feature type="sequence conflict" description="In Ref. 2." evidence="3" ref="2">
    <original>E</original>
    <variation>EDE</variation>
    <location>
        <position position="179"/>
    </location>
</feature>
<feature type="sequence conflict" description="In Ref. 2." evidence="3" ref="2">
    <original>RV</original>
    <variation>HI</variation>
    <location>
        <begin position="199"/>
        <end position="200"/>
    </location>
</feature>
<feature type="sequence conflict" description="In Ref. 2." evidence="3" ref="2">
    <original>A</original>
    <variation>G</variation>
    <location>
        <position position="352"/>
    </location>
</feature>
<organism>
    <name type="scientific">Phycomyces blakesleeanus (strain ATCC 8743b / DSM 1359 / FGSC 10004 / NBRC 33097 / NRRL 1555)</name>
    <dbReference type="NCBI Taxonomy" id="763407"/>
    <lineage>
        <taxon>Eukaryota</taxon>
        <taxon>Fungi</taxon>
        <taxon>Fungi incertae sedis</taxon>
        <taxon>Mucoromycota</taxon>
        <taxon>Mucoromycotina</taxon>
        <taxon>Mucoromycetes</taxon>
        <taxon>Mucorales</taxon>
        <taxon>Phycomycetaceae</taxon>
        <taxon>Phycomyces</taxon>
    </lineage>
</organism>
<comment type="function">
    <text evidence="3">Polymerizes chitin, a structural polymer of the cell wall and septum, by transferring the sugar moiety of UDP-GlcNAc to the non-reducing end of the growing chitin polymer.</text>
</comment>
<comment type="catalytic activity">
    <reaction>
        <text>[(1-&gt;4)-N-acetyl-beta-D-glucosaminyl](n) + UDP-N-acetyl-alpha-D-glucosamine = [(1-&gt;4)-N-acetyl-beta-D-glucosaminyl](n+1) + UDP + H(+)</text>
        <dbReference type="Rhea" id="RHEA:16637"/>
        <dbReference type="Rhea" id="RHEA-COMP:9593"/>
        <dbReference type="Rhea" id="RHEA-COMP:9595"/>
        <dbReference type="ChEBI" id="CHEBI:15378"/>
        <dbReference type="ChEBI" id="CHEBI:17029"/>
        <dbReference type="ChEBI" id="CHEBI:57705"/>
        <dbReference type="ChEBI" id="CHEBI:58223"/>
        <dbReference type="EC" id="2.4.1.16"/>
    </reaction>
</comment>
<comment type="subcellular location">
    <subcellularLocation>
        <location evidence="3">Cell membrane</location>
        <topology evidence="1">Multi-pass membrane protein</topology>
    </subcellularLocation>
</comment>
<comment type="similarity">
    <text evidence="3">Belongs to the chitin synthase family.</text>
</comment>
<sequence>MNPGQKQEHDQYPLHDTQFVPQQMDRNSPFADPYPEDQPPPSGYDHQPLLRDNAPSYPPDPFGQPGGYPPQSTMYPPQPMGPPSPNMRYGEAPRRQPRRYKTTRRVKLTHGNLILDCPVPTPYLQAVPIKDTKEFTHMRYTAATCDPADFASQGYTLRQPILQRNTELFIVLTMYNEDEILFARTMHGVMKNIAHLCSRVRSNVWEGPKAWEKVVVCIVSDGRKKIHPRTLSLLATLGVYQDGVAKNVVGDKPVTAHIYEYTTQLSVDPEMKFKGADKGMPPCQILFCLKENNQKKINSHRWFFQAFGPVINPNVCVLIDVGTRPGKTSIYHLWKAFDISSNIAGACGEIRAMSGTAGVALLNPLVAAQNFEYKMSNILDKPLESVFGYISVLPGAFSAYRFTALQNDENGHGPLEKYFLGESQHGADADIFTANMYLAEDRILCYELVAKKKANWVLHYVSSSYGETDVPDSVPEFISQRRRWLNGSFFAGCYALFHWRKVWASDHSFVRKLMFMFEDLYNTYNLIFSWFALGNFYLTFYILTSALGAESLDPKPFSANVASILHTILNYIYILLIIVQFILALGNRPQGSKWAYFGSMTFFAILMVYMMFATIWITVVGVQDAVANADGSFTAMLGESTFRNIIISIVSTYAMYFIASFLFFDPWHMFTSFIQYIFLSPSYTNILNIYAFCNTHDVSWGTKGDNTVSTDLGVVKSKKDGSGDTTVEVEVPTEQKDINEAYEEACVELTRQVEPEVSHRDAKTKQEDYYRSFRTRLVISWIISNLILVVLITNENILASFGTFEVRSTSYLGFVLWSVAGLSAIRFCGSGLYLIFRIFMG</sequence>
<name>CHS1_PHYB8</name>
<dbReference type="EC" id="2.4.1.16"/>
<dbReference type="EMBL" id="AB003043">
    <property type="protein sequence ID" value="BAA19857.1"/>
    <property type="molecule type" value="Genomic_DNA"/>
</dbReference>
<dbReference type="PIR" id="JT0767">
    <property type="entry name" value="JT0767"/>
</dbReference>
<dbReference type="SMR" id="P87073"/>
<dbReference type="CAZy" id="GT2">
    <property type="family name" value="Glycosyltransferase Family 2"/>
</dbReference>
<dbReference type="VEuPathDB" id="FungiDB:PHYBLDRAFT_122907"/>
<dbReference type="GO" id="GO:0030428">
    <property type="term" value="C:cell septum"/>
    <property type="evidence" value="ECO:0007669"/>
    <property type="project" value="TreeGrafter"/>
</dbReference>
<dbReference type="GO" id="GO:0005886">
    <property type="term" value="C:plasma membrane"/>
    <property type="evidence" value="ECO:0007669"/>
    <property type="project" value="UniProtKB-SubCell"/>
</dbReference>
<dbReference type="GO" id="GO:0004100">
    <property type="term" value="F:chitin synthase activity"/>
    <property type="evidence" value="ECO:0007669"/>
    <property type="project" value="UniProtKB-EC"/>
</dbReference>
<dbReference type="GO" id="GO:0071555">
    <property type="term" value="P:cell wall organization"/>
    <property type="evidence" value="ECO:0007669"/>
    <property type="project" value="UniProtKB-KW"/>
</dbReference>
<dbReference type="GO" id="GO:0006031">
    <property type="term" value="P:chitin biosynthetic process"/>
    <property type="evidence" value="ECO:0007669"/>
    <property type="project" value="InterPro"/>
</dbReference>
<dbReference type="CDD" id="cd04190">
    <property type="entry name" value="Chitin_synth_C"/>
    <property type="match status" value="1"/>
</dbReference>
<dbReference type="InterPro" id="IPR004835">
    <property type="entry name" value="Chitin_synth"/>
</dbReference>
<dbReference type="InterPro" id="IPR004834">
    <property type="entry name" value="Chitin_synth_fun"/>
</dbReference>
<dbReference type="InterPro" id="IPR013616">
    <property type="entry name" value="Chitin_synth_N"/>
</dbReference>
<dbReference type="InterPro" id="IPR029044">
    <property type="entry name" value="Nucleotide-diphossugar_trans"/>
</dbReference>
<dbReference type="PANTHER" id="PTHR22914">
    <property type="entry name" value="CHITIN SYNTHASE"/>
    <property type="match status" value="1"/>
</dbReference>
<dbReference type="PANTHER" id="PTHR22914:SF9">
    <property type="entry name" value="CHITIN SYNTHASE 1"/>
    <property type="match status" value="1"/>
</dbReference>
<dbReference type="Pfam" id="PF01644">
    <property type="entry name" value="Chitin_synth_1"/>
    <property type="match status" value="1"/>
</dbReference>
<dbReference type="Pfam" id="PF08407">
    <property type="entry name" value="Chitin_synth_1N"/>
    <property type="match status" value="1"/>
</dbReference>
<dbReference type="SUPFAM" id="SSF53448">
    <property type="entry name" value="Nucleotide-diphospho-sugar transferases"/>
    <property type="match status" value="1"/>
</dbReference>
<proteinExistence type="inferred from homology"/>